<gene>
    <name evidence="1" type="primary">groEL</name>
    <name evidence="1" type="synonym">groL</name>
    <name type="synonym">mopA</name>
    <name type="ordered locus">FTL_1714</name>
</gene>
<keyword id="KW-0067">ATP-binding</keyword>
<keyword id="KW-0143">Chaperone</keyword>
<keyword id="KW-0963">Cytoplasm</keyword>
<keyword id="KW-0413">Isomerase</keyword>
<keyword id="KW-0547">Nucleotide-binding</keyword>
<keyword id="KW-1185">Reference proteome</keyword>
<reference key="1">
    <citation type="submission" date="1996-06" db="EMBL/GenBank/DDBJ databases">
        <authorList>
            <person name="Ericsson M."/>
            <person name="Golovliov I."/>
            <person name="Sjoestedt A."/>
            <person name="Taernvik A."/>
        </authorList>
    </citation>
    <scope>NUCLEOTIDE SEQUENCE [GENOMIC DNA]</scope>
</reference>
<reference key="2">
    <citation type="submission" date="2006-03" db="EMBL/GenBank/DDBJ databases">
        <title>Complete genome sequence of Francisella tularensis LVS (Live Vaccine Strain).</title>
        <authorList>
            <person name="Chain P."/>
            <person name="Larimer F."/>
            <person name="Land M."/>
            <person name="Stilwagen S."/>
            <person name="Larsson P."/>
            <person name="Bearden S."/>
            <person name="Chu M."/>
            <person name="Oyston P."/>
            <person name="Forsman M."/>
            <person name="Andersson S."/>
            <person name="Lindler L."/>
            <person name="Titball R."/>
            <person name="Garcia E."/>
        </authorList>
    </citation>
    <scope>NUCLEOTIDE SEQUENCE [LARGE SCALE GENOMIC DNA]</scope>
    <source>
        <strain>LVS</strain>
    </source>
</reference>
<protein>
    <recommendedName>
        <fullName evidence="1">Chaperonin GroEL</fullName>
        <ecNumber evidence="1">5.6.1.7</ecNumber>
    </recommendedName>
    <alternativeName>
        <fullName evidence="1">60 kDa chaperonin</fullName>
    </alternativeName>
    <alternativeName>
        <fullName evidence="1">Chaperonin-60</fullName>
        <shortName evidence="1">Cpn60</shortName>
    </alternativeName>
</protein>
<comment type="function">
    <text evidence="1">Together with its co-chaperonin GroES, plays an essential role in assisting protein folding. The GroEL-GroES system forms a nano-cage that allows encapsulation of the non-native substrate proteins and provides a physical environment optimized to promote and accelerate protein folding.</text>
</comment>
<comment type="catalytic activity">
    <reaction evidence="1">
        <text>ATP + H2O + a folded polypeptide = ADP + phosphate + an unfolded polypeptide.</text>
        <dbReference type="EC" id="5.6.1.7"/>
    </reaction>
</comment>
<comment type="subunit">
    <text evidence="1">Forms a cylinder of 14 subunits composed of two heptameric rings stacked back-to-back. Interacts with the co-chaperonin GroES.</text>
</comment>
<comment type="subcellular location">
    <subcellularLocation>
        <location evidence="1">Cytoplasm</location>
    </subcellularLocation>
</comment>
<comment type="similarity">
    <text evidence="1">Belongs to the chaperonin (HSP60) family.</text>
</comment>
<evidence type="ECO:0000255" key="1">
    <source>
        <dbReference type="HAMAP-Rule" id="MF_00600"/>
    </source>
</evidence>
<evidence type="ECO:0000305" key="2"/>
<feature type="chain" id="PRO_0000063377" description="Chaperonin GroEL">
    <location>
        <begin position="1"/>
        <end position="544"/>
    </location>
</feature>
<feature type="binding site" evidence="1">
    <location>
        <begin position="30"/>
        <end position="33"/>
    </location>
    <ligand>
        <name>ATP</name>
        <dbReference type="ChEBI" id="CHEBI:30616"/>
    </ligand>
</feature>
<feature type="binding site" evidence="1">
    <location>
        <position position="51"/>
    </location>
    <ligand>
        <name>ATP</name>
        <dbReference type="ChEBI" id="CHEBI:30616"/>
    </ligand>
</feature>
<feature type="binding site" evidence="1">
    <location>
        <begin position="87"/>
        <end position="91"/>
    </location>
    <ligand>
        <name>ATP</name>
        <dbReference type="ChEBI" id="CHEBI:30616"/>
    </ligand>
</feature>
<feature type="binding site" evidence="1">
    <location>
        <position position="415"/>
    </location>
    <ligand>
        <name>ATP</name>
        <dbReference type="ChEBI" id="CHEBI:30616"/>
    </ligand>
</feature>
<feature type="binding site" evidence="1">
    <location>
        <begin position="479"/>
        <end position="481"/>
    </location>
    <ligand>
        <name>ATP</name>
        <dbReference type="ChEBI" id="CHEBI:30616"/>
    </ligand>
</feature>
<feature type="binding site" evidence="1">
    <location>
        <position position="495"/>
    </location>
    <ligand>
        <name>ATP</name>
        <dbReference type="ChEBI" id="CHEBI:30616"/>
    </ligand>
</feature>
<feature type="sequence conflict" description="In Ref. 1; CAA67358." evidence="2" ref="1">
    <original>A</original>
    <variation>T</variation>
    <location>
        <position position="275"/>
    </location>
</feature>
<accession>P94798</accession>
<accession>Q2A1Q7</accession>
<proteinExistence type="inferred from homology"/>
<sequence>MAAKQVLFSDEARAKMLDGVNTLANAVKVTLGPKGRNVVLDKSFGAPTITKDGVSVAKEIELEDKFENMGAQIVKEVASKTADVAGDGTTTATVLAQALLTEGLKAVTAGMNPMDLKRGIDKATARLVEELKALSKPCSDPKSIEQVGTISANSDATVGKLIADAMAKVGKEGVITVEEGKGFEDELDVVEGMQFDRGYLSPYFATNQENMTTDLENPYILIVDKKISNIRDLLPILEGVSKSGRALLIIAEDVESEALATLVVNNMRGVVKVCAVKAPGFGDRRKAMLEDIATLTGATFVSEDLSMKLEETNMEHLGTASRVQVTKDNTTIIDGAGEKEAIAKRINVIKANIAEANSDYDREKLQERLAKLSGGVAVIKVGAVTEAEMKEKKDRVDDALHATRAAVEEGIVAGGGVALIRAQKALDGLTGENDDQNHGIALLRKAIEAPLRQIVSNAGGESSVVVNQVKANQGNYGYNAANDTYGDMVEMGILDPTKVTRSALQHAASIAGLMITTEAMIGEIKEAAPAMPMGGGMGGMPGMM</sequence>
<dbReference type="EC" id="5.6.1.7" evidence="1"/>
<dbReference type="EMBL" id="X98853">
    <property type="protein sequence ID" value="CAA67358.1"/>
    <property type="molecule type" value="Genomic_DNA"/>
</dbReference>
<dbReference type="EMBL" id="AM233362">
    <property type="protein sequence ID" value="CAJ80153.1"/>
    <property type="molecule type" value="Genomic_DNA"/>
</dbReference>
<dbReference type="RefSeq" id="WP_003017167.1">
    <property type="nucleotide sequence ID" value="NZ_CP009694.1"/>
</dbReference>
<dbReference type="SMR" id="P94798"/>
<dbReference type="KEGG" id="ftl:FTL_1714"/>
<dbReference type="Proteomes" id="UP000001944">
    <property type="component" value="Chromosome"/>
</dbReference>
<dbReference type="GO" id="GO:0005737">
    <property type="term" value="C:cytoplasm"/>
    <property type="evidence" value="ECO:0007669"/>
    <property type="project" value="UniProtKB-SubCell"/>
</dbReference>
<dbReference type="GO" id="GO:0005524">
    <property type="term" value="F:ATP binding"/>
    <property type="evidence" value="ECO:0007669"/>
    <property type="project" value="UniProtKB-UniRule"/>
</dbReference>
<dbReference type="GO" id="GO:0140662">
    <property type="term" value="F:ATP-dependent protein folding chaperone"/>
    <property type="evidence" value="ECO:0007669"/>
    <property type="project" value="InterPro"/>
</dbReference>
<dbReference type="GO" id="GO:0016853">
    <property type="term" value="F:isomerase activity"/>
    <property type="evidence" value="ECO:0007669"/>
    <property type="project" value="UniProtKB-KW"/>
</dbReference>
<dbReference type="GO" id="GO:0051082">
    <property type="term" value="F:unfolded protein binding"/>
    <property type="evidence" value="ECO:0007669"/>
    <property type="project" value="UniProtKB-UniRule"/>
</dbReference>
<dbReference type="GO" id="GO:0042026">
    <property type="term" value="P:protein refolding"/>
    <property type="evidence" value="ECO:0007669"/>
    <property type="project" value="UniProtKB-UniRule"/>
</dbReference>
<dbReference type="CDD" id="cd03344">
    <property type="entry name" value="GroEL"/>
    <property type="match status" value="1"/>
</dbReference>
<dbReference type="FunFam" id="1.10.560.10:FF:000001">
    <property type="entry name" value="60 kDa chaperonin"/>
    <property type="match status" value="1"/>
</dbReference>
<dbReference type="FunFam" id="3.50.7.10:FF:000001">
    <property type="entry name" value="60 kDa chaperonin"/>
    <property type="match status" value="1"/>
</dbReference>
<dbReference type="Gene3D" id="3.50.7.10">
    <property type="entry name" value="GroEL"/>
    <property type="match status" value="1"/>
</dbReference>
<dbReference type="Gene3D" id="1.10.560.10">
    <property type="entry name" value="GroEL-like equatorial domain"/>
    <property type="match status" value="1"/>
</dbReference>
<dbReference type="Gene3D" id="3.30.260.10">
    <property type="entry name" value="TCP-1-like chaperonin intermediate domain"/>
    <property type="match status" value="1"/>
</dbReference>
<dbReference type="HAMAP" id="MF_00600">
    <property type="entry name" value="CH60"/>
    <property type="match status" value="1"/>
</dbReference>
<dbReference type="InterPro" id="IPR018370">
    <property type="entry name" value="Chaperonin_Cpn60_CS"/>
</dbReference>
<dbReference type="InterPro" id="IPR001844">
    <property type="entry name" value="Cpn60/GroEL"/>
</dbReference>
<dbReference type="InterPro" id="IPR002423">
    <property type="entry name" value="Cpn60/GroEL/TCP-1"/>
</dbReference>
<dbReference type="InterPro" id="IPR027409">
    <property type="entry name" value="GroEL-like_apical_dom_sf"/>
</dbReference>
<dbReference type="InterPro" id="IPR027413">
    <property type="entry name" value="GROEL-like_equatorial_sf"/>
</dbReference>
<dbReference type="InterPro" id="IPR027410">
    <property type="entry name" value="TCP-1-like_intermed_sf"/>
</dbReference>
<dbReference type="NCBIfam" id="TIGR02348">
    <property type="entry name" value="GroEL"/>
    <property type="match status" value="1"/>
</dbReference>
<dbReference type="NCBIfam" id="NF000592">
    <property type="entry name" value="PRK00013.1"/>
    <property type="match status" value="1"/>
</dbReference>
<dbReference type="NCBIfam" id="NF009487">
    <property type="entry name" value="PRK12849.1"/>
    <property type="match status" value="1"/>
</dbReference>
<dbReference type="NCBIfam" id="NF009488">
    <property type="entry name" value="PRK12850.1"/>
    <property type="match status" value="1"/>
</dbReference>
<dbReference type="NCBIfam" id="NF009489">
    <property type="entry name" value="PRK12851.1"/>
    <property type="match status" value="1"/>
</dbReference>
<dbReference type="PANTHER" id="PTHR45633">
    <property type="entry name" value="60 KDA HEAT SHOCK PROTEIN, MITOCHONDRIAL"/>
    <property type="match status" value="1"/>
</dbReference>
<dbReference type="Pfam" id="PF00118">
    <property type="entry name" value="Cpn60_TCP1"/>
    <property type="match status" value="1"/>
</dbReference>
<dbReference type="PRINTS" id="PR00298">
    <property type="entry name" value="CHAPERONIN60"/>
</dbReference>
<dbReference type="SUPFAM" id="SSF52029">
    <property type="entry name" value="GroEL apical domain-like"/>
    <property type="match status" value="1"/>
</dbReference>
<dbReference type="SUPFAM" id="SSF48592">
    <property type="entry name" value="GroEL equatorial domain-like"/>
    <property type="match status" value="1"/>
</dbReference>
<dbReference type="SUPFAM" id="SSF54849">
    <property type="entry name" value="GroEL-intermediate domain like"/>
    <property type="match status" value="1"/>
</dbReference>
<dbReference type="PROSITE" id="PS00296">
    <property type="entry name" value="CHAPERONINS_CPN60"/>
    <property type="match status" value="1"/>
</dbReference>
<organism>
    <name type="scientific">Francisella tularensis subsp. holarctica (strain LVS)</name>
    <dbReference type="NCBI Taxonomy" id="376619"/>
    <lineage>
        <taxon>Bacteria</taxon>
        <taxon>Pseudomonadati</taxon>
        <taxon>Pseudomonadota</taxon>
        <taxon>Gammaproteobacteria</taxon>
        <taxon>Thiotrichales</taxon>
        <taxon>Francisellaceae</taxon>
        <taxon>Francisella</taxon>
    </lineage>
</organism>
<name>CH60_FRATH</name>